<reference key="1">
    <citation type="journal article" date="2000" name="Proc. Natl. Acad. Sci. U.S.A.">
        <title>Archaeal adaptation to higher temperatures revealed by genomic sequence of Thermoplasma volcanium.</title>
        <authorList>
            <person name="Kawashima T."/>
            <person name="Amano N."/>
            <person name="Koike H."/>
            <person name="Makino S."/>
            <person name="Higuchi S."/>
            <person name="Kawashima-Ohya Y."/>
            <person name="Watanabe K."/>
            <person name="Yamazaki M."/>
            <person name="Kanehori K."/>
            <person name="Kawamoto T."/>
            <person name="Nunoshiba T."/>
            <person name="Yamamoto Y."/>
            <person name="Aramaki H."/>
            <person name="Makino K."/>
            <person name="Suzuki M."/>
        </authorList>
    </citation>
    <scope>NUCLEOTIDE SEQUENCE [LARGE SCALE GENOMIC DNA]</scope>
    <source>
        <strain>ATCC 51530 / DSM 4299 / JCM 9571 / NBRC 15438 / GSS1</strain>
    </source>
</reference>
<protein>
    <recommendedName>
        <fullName>DNA polymerase II large subunit</fullName>
        <shortName>Pol II</shortName>
        <ecNumber evidence="2">2.7.7.7</ecNumber>
    </recommendedName>
    <alternativeName>
        <fullName evidence="2">Exodeoxyribonuclease large subunit</fullName>
        <ecNumber evidence="2">3.1.11.1</ecNumber>
    </alternativeName>
</protein>
<name>DP2L_THEVO</name>
<sequence>MTILHSTMLSEVLDLESYRKKISDEVRECFDLASQARELGMDVTDKVEIPLASDMAERIEALIGISGIADQIRDLSKKMSREEVSLEMSRRVANIFKDNKKEALDKAIRVGLAILTEGILVAPLEGIADVYIGKNADGSDYVGISYAGPIRGAGGTAQALSVLIGDVVRRELGITRYIPTEEEIERYIEEIESYDRIKHLQYLPTPDEIKLVVKNSPVCIDGEGSEEEEVSGHRDMARVKTNRIRGGMCLVLCEGLVQKARKILKYTSSMHLEEWSFLSSISGKSDDKGSKKSDKFLKDIVAGRPVFSHPSRPGGFRLRYGRSRVSGLAAASLNPATMYIMGKFIAIGSQIKVELPGKAAAVTPCDTIDGPTVLLRNGDHVKINNIEKAKELYDEVVEITDAGEILIAYGDFLENNYNLPTASFTKEWWMQYLPDGLDGNEVDQFRAVELSRQYNIPLHPDFDYYWHDISFEELEYLISAVENGRLSDNSFLIPYSASEVLIKLGVQFKRSGNFLVLNQYYPLLVSLGYDVFEDKIKRVKPYQRKSSVLETVNYLSGITIKPRAPTRVGSRLGRPEKAGDRKMKPMVHSLFPVESYGEARRSILNANKKTDGTYKAEVFFYRCTSCGYESPSPTCPKCGSRSKPIGTKNSEIDLSVILRKAEDRLGIKLDELKEFKGVKKLMSKEKVAEPIEKGILRAIHGISVNKDGTCRFDMSDIPITHFRYKEIGISKEKLSELGYEVKDVNEIFPQDVIIPRKAAKYLFDVSKFIDDLLVRYYGLPPFYSLKSEEDLVGHLVIGLAPHTSGGVVGRIIGFSDVNAFYAHPFFHAAKRRNCDGDEDSVMLLMDGFLNFSARYLPSTTGGLMDAPLVLSVLINPDEIDKEALNVDTLQKYPLIFYEATERHAAPSELEETMMTMKVRIKKTATYRNSSYTFDTSDINKGVLVSSYKTLATMDDKISEQLGLARRIRAVDADDVAARVISTHFLPDMYGNFRRFFSQEFRCTKCNAKYRRIPLSGRCMKCGSDSLTLTIHKGSVIKYLDETLKIEKEYNIPKYLKERIDNLARTIKETFPDEEKPDAAIKITGLDMY</sequence>
<dbReference type="EC" id="2.7.7.7" evidence="2"/>
<dbReference type="EC" id="3.1.11.1" evidence="2"/>
<dbReference type="EMBL" id="BA000011">
    <property type="protein sequence ID" value="BAB59177.1"/>
    <property type="molecule type" value="Genomic_DNA"/>
</dbReference>
<dbReference type="SMR" id="Q97CR6"/>
<dbReference type="STRING" id="273116.gene:9380800"/>
<dbReference type="PaxDb" id="273116-14324249"/>
<dbReference type="KEGG" id="tvo:TVG0041370"/>
<dbReference type="eggNOG" id="arCOG04447">
    <property type="taxonomic scope" value="Archaea"/>
</dbReference>
<dbReference type="HOGENOM" id="CLU_001154_0_0_2"/>
<dbReference type="PhylomeDB" id="Q97CR6"/>
<dbReference type="Proteomes" id="UP000001017">
    <property type="component" value="Chromosome"/>
</dbReference>
<dbReference type="GO" id="GO:0003677">
    <property type="term" value="F:DNA binding"/>
    <property type="evidence" value="ECO:0007669"/>
    <property type="project" value="UniProtKB-UniRule"/>
</dbReference>
<dbReference type="GO" id="GO:0003887">
    <property type="term" value="F:DNA-directed DNA polymerase activity"/>
    <property type="evidence" value="ECO:0007669"/>
    <property type="project" value="UniProtKB-UniRule"/>
</dbReference>
<dbReference type="GO" id="GO:0008310">
    <property type="term" value="F:single-stranded DNA 3'-5' DNA exonuclease activity"/>
    <property type="evidence" value="ECO:0007669"/>
    <property type="project" value="UniProtKB-EC"/>
</dbReference>
<dbReference type="GO" id="GO:0006308">
    <property type="term" value="P:DNA catabolic process"/>
    <property type="evidence" value="ECO:0007669"/>
    <property type="project" value="UniProtKB-UniRule"/>
</dbReference>
<dbReference type="GO" id="GO:0006261">
    <property type="term" value="P:DNA-templated DNA replication"/>
    <property type="evidence" value="ECO:0007669"/>
    <property type="project" value="UniProtKB-UniRule"/>
</dbReference>
<dbReference type="HAMAP" id="MF_00324">
    <property type="entry name" value="DNApol_II_L_arch"/>
    <property type="match status" value="1"/>
</dbReference>
<dbReference type="InterPro" id="IPR004475">
    <property type="entry name" value="PolC_DP2"/>
</dbReference>
<dbReference type="InterPro" id="IPR056172">
    <property type="entry name" value="PolC_DP2_cat_dom"/>
</dbReference>
<dbReference type="InterPro" id="IPR056171">
    <property type="entry name" value="PolC_DP2_central_dom"/>
</dbReference>
<dbReference type="InterPro" id="IPR016033">
    <property type="entry name" value="PolC_DP2_N"/>
</dbReference>
<dbReference type="NCBIfam" id="TIGR00354">
    <property type="entry name" value="polC"/>
    <property type="match status" value="1"/>
</dbReference>
<dbReference type="NCBIfam" id="NF003103">
    <property type="entry name" value="PRK04023.1"/>
    <property type="match status" value="1"/>
</dbReference>
<dbReference type="PANTHER" id="PTHR42210">
    <property type="entry name" value="DNA POLYMERASE II LARGE SUBUNIT"/>
    <property type="match status" value="1"/>
</dbReference>
<dbReference type="PANTHER" id="PTHR42210:SF1">
    <property type="entry name" value="DNA POLYMERASE II LARGE SUBUNIT"/>
    <property type="match status" value="1"/>
</dbReference>
<dbReference type="Pfam" id="PF24846">
    <property type="entry name" value="PolC_DP2_cat"/>
    <property type="match status" value="1"/>
</dbReference>
<dbReference type="Pfam" id="PF24844">
    <property type="entry name" value="PolC_DP2_central"/>
    <property type="match status" value="1"/>
</dbReference>
<dbReference type="Pfam" id="PF03833">
    <property type="entry name" value="PolC_DP2_N"/>
    <property type="match status" value="1"/>
</dbReference>
<dbReference type="PIRSF" id="PIRSF016275">
    <property type="entry name" value="PolC_DP2"/>
    <property type="match status" value="1"/>
</dbReference>
<accession>Q97CR6</accession>
<keyword id="KW-0235">DNA replication</keyword>
<keyword id="KW-0238">DNA-binding</keyword>
<keyword id="KW-0239">DNA-directed DNA polymerase</keyword>
<keyword id="KW-0269">Exonuclease</keyword>
<keyword id="KW-0378">Hydrolase</keyword>
<keyword id="KW-0511">Multifunctional enzyme</keyword>
<keyword id="KW-0540">Nuclease</keyword>
<keyword id="KW-0548">Nucleotidyltransferase</keyword>
<keyword id="KW-0808">Transferase</keyword>
<evidence type="ECO:0000250" key="1"/>
<evidence type="ECO:0000255" key="2">
    <source>
        <dbReference type="HAMAP-Rule" id="MF_00324"/>
    </source>
</evidence>
<evidence type="ECO:0000305" key="3"/>
<feature type="chain" id="PRO_0000152581" description="DNA polymerase II large subunit">
    <location>
        <begin position="1"/>
        <end position="1088"/>
    </location>
</feature>
<comment type="function">
    <text evidence="1">Possesses two activities: a DNA synthesis (polymerase) and an exonucleolytic activity that degrades single-stranded DNA in the 3'- to 5'-direction. Has a template-primer preference which is characteristic of a replicative DNA polymerase (By similarity).</text>
</comment>
<comment type="catalytic activity">
    <reaction>
        <text>DNA(n) + a 2'-deoxyribonucleoside 5'-triphosphate = DNA(n+1) + diphosphate</text>
        <dbReference type="Rhea" id="RHEA:22508"/>
        <dbReference type="Rhea" id="RHEA-COMP:17339"/>
        <dbReference type="Rhea" id="RHEA-COMP:17340"/>
        <dbReference type="ChEBI" id="CHEBI:33019"/>
        <dbReference type="ChEBI" id="CHEBI:61560"/>
        <dbReference type="ChEBI" id="CHEBI:173112"/>
        <dbReference type="EC" id="2.7.7.7"/>
    </reaction>
</comment>
<comment type="catalytic activity">
    <reaction evidence="2">
        <text>Exonucleolytic cleavage in the 3'- to 5'-direction to yield nucleoside 5'-phosphates.</text>
        <dbReference type="EC" id="3.1.11.1"/>
    </reaction>
</comment>
<comment type="subunit">
    <text evidence="1">Heterodimer of a large subunit and a small subunit.</text>
</comment>
<comment type="similarity">
    <text evidence="3">Belongs to the archaeal DNA polymerase II family.</text>
</comment>
<gene>
    <name type="primary">polC</name>
    <name type="ordered locus">TV0035</name>
    <name type="ORF">TVG0041370</name>
</gene>
<proteinExistence type="inferred from homology"/>
<organism>
    <name type="scientific">Thermoplasma volcanium (strain ATCC 51530 / DSM 4299 / JCM 9571 / NBRC 15438 / GSS1)</name>
    <dbReference type="NCBI Taxonomy" id="273116"/>
    <lineage>
        <taxon>Archaea</taxon>
        <taxon>Methanobacteriati</taxon>
        <taxon>Thermoplasmatota</taxon>
        <taxon>Thermoplasmata</taxon>
        <taxon>Thermoplasmatales</taxon>
        <taxon>Thermoplasmataceae</taxon>
        <taxon>Thermoplasma</taxon>
    </lineage>
</organism>